<organism>
    <name type="scientific">Acetivibrio thermocellus (strain ATCC 27405 / DSM 1237 / JCM 9322 / NBRC 103400 / NCIMB 10682 / NRRL B-4536 / VPI 7372)</name>
    <name type="common">Clostridium thermocellum</name>
    <dbReference type="NCBI Taxonomy" id="203119"/>
    <lineage>
        <taxon>Bacteria</taxon>
        <taxon>Bacillati</taxon>
        <taxon>Bacillota</taxon>
        <taxon>Clostridia</taxon>
        <taxon>Eubacteriales</taxon>
        <taxon>Oscillospiraceae</taxon>
        <taxon>Acetivibrio</taxon>
    </lineage>
</organism>
<reference key="1">
    <citation type="submission" date="2007-02" db="EMBL/GenBank/DDBJ databases">
        <title>Complete sequence of Clostridium thermocellum ATCC 27405.</title>
        <authorList>
            <consortium name="US DOE Joint Genome Institute"/>
            <person name="Copeland A."/>
            <person name="Lucas S."/>
            <person name="Lapidus A."/>
            <person name="Barry K."/>
            <person name="Detter J.C."/>
            <person name="Glavina del Rio T."/>
            <person name="Hammon N."/>
            <person name="Israni S."/>
            <person name="Dalin E."/>
            <person name="Tice H."/>
            <person name="Pitluck S."/>
            <person name="Chertkov O."/>
            <person name="Brettin T."/>
            <person name="Bruce D."/>
            <person name="Han C."/>
            <person name="Tapia R."/>
            <person name="Gilna P."/>
            <person name="Schmutz J."/>
            <person name="Larimer F."/>
            <person name="Land M."/>
            <person name="Hauser L."/>
            <person name="Kyrpides N."/>
            <person name="Mikhailova N."/>
            <person name="Wu J.H.D."/>
            <person name="Newcomb M."/>
            <person name="Richardson P."/>
        </authorList>
    </citation>
    <scope>NUCLEOTIDE SEQUENCE [LARGE SCALE GENOMIC DNA]</scope>
    <source>
        <strain>ATCC 27405 / DSM 1237 / JCM 9322 / NBRC 103400 / NCIMB 10682 / NRRL B-4536 / VPI 7372</strain>
    </source>
</reference>
<name>YBEY_ACET2</name>
<proteinExistence type="inferred from homology"/>
<evidence type="ECO:0000255" key="1">
    <source>
        <dbReference type="HAMAP-Rule" id="MF_00009"/>
    </source>
</evidence>
<sequence>MEIFIENIQDKIEITDEILELMEKAIKMCLEHEKFEYPYEVSIILTDNEKIREINYEQRNIDKPTDVLSFPIVDMYDGVIKSSQGDFDLDEGRIILGDILISMEKAKEQSMEYGHSFERELIFLLTHGVFHLLGYDHDTPEREKKMFEKQEAILKSLNLERN</sequence>
<gene>
    <name evidence="1" type="primary">ybeY</name>
    <name type="ordered locus">Cthe_1069</name>
</gene>
<feature type="chain" id="PRO_1000000718" description="Endoribonuclease YbeY">
    <location>
        <begin position="1"/>
        <end position="162"/>
    </location>
</feature>
<feature type="binding site" evidence="1">
    <location>
        <position position="127"/>
    </location>
    <ligand>
        <name>Zn(2+)</name>
        <dbReference type="ChEBI" id="CHEBI:29105"/>
        <note>catalytic</note>
    </ligand>
</feature>
<feature type="binding site" evidence="1">
    <location>
        <position position="131"/>
    </location>
    <ligand>
        <name>Zn(2+)</name>
        <dbReference type="ChEBI" id="CHEBI:29105"/>
        <note>catalytic</note>
    </ligand>
</feature>
<feature type="binding site" evidence="1">
    <location>
        <position position="137"/>
    </location>
    <ligand>
        <name>Zn(2+)</name>
        <dbReference type="ChEBI" id="CHEBI:29105"/>
        <note>catalytic</note>
    </ligand>
</feature>
<comment type="function">
    <text evidence="1">Single strand-specific metallo-endoribonuclease involved in late-stage 70S ribosome quality control and in maturation of the 3' terminus of the 16S rRNA.</text>
</comment>
<comment type="cofactor">
    <cofactor evidence="1">
        <name>Zn(2+)</name>
        <dbReference type="ChEBI" id="CHEBI:29105"/>
    </cofactor>
    <text evidence="1">Binds 1 zinc ion.</text>
</comment>
<comment type="subcellular location">
    <subcellularLocation>
        <location evidence="1">Cytoplasm</location>
    </subcellularLocation>
</comment>
<comment type="similarity">
    <text evidence="1">Belongs to the endoribonuclease YbeY family.</text>
</comment>
<protein>
    <recommendedName>
        <fullName evidence="1">Endoribonuclease YbeY</fullName>
        <ecNumber evidence="1">3.1.-.-</ecNumber>
    </recommendedName>
</protein>
<accession>A3DEC2</accession>
<dbReference type="EC" id="3.1.-.-" evidence="1"/>
<dbReference type="EMBL" id="CP000568">
    <property type="protein sequence ID" value="ABN52301.1"/>
    <property type="molecule type" value="Genomic_DNA"/>
</dbReference>
<dbReference type="RefSeq" id="WP_003515687.1">
    <property type="nucleotide sequence ID" value="NC_009012.1"/>
</dbReference>
<dbReference type="SMR" id="A3DEC2"/>
<dbReference type="STRING" id="203119.Cthe_1069"/>
<dbReference type="GeneID" id="35806218"/>
<dbReference type="KEGG" id="cth:Cthe_1069"/>
<dbReference type="eggNOG" id="COG0319">
    <property type="taxonomic scope" value="Bacteria"/>
</dbReference>
<dbReference type="HOGENOM" id="CLU_106710_3_0_9"/>
<dbReference type="OrthoDB" id="9807740at2"/>
<dbReference type="Proteomes" id="UP000002145">
    <property type="component" value="Chromosome"/>
</dbReference>
<dbReference type="GO" id="GO:0005737">
    <property type="term" value="C:cytoplasm"/>
    <property type="evidence" value="ECO:0007669"/>
    <property type="project" value="UniProtKB-SubCell"/>
</dbReference>
<dbReference type="GO" id="GO:0004222">
    <property type="term" value="F:metalloendopeptidase activity"/>
    <property type="evidence" value="ECO:0007669"/>
    <property type="project" value="InterPro"/>
</dbReference>
<dbReference type="GO" id="GO:0004521">
    <property type="term" value="F:RNA endonuclease activity"/>
    <property type="evidence" value="ECO:0007669"/>
    <property type="project" value="UniProtKB-UniRule"/>
</dbReference>
<dbReference type="GO" id="GO:0008270">
    <property type="term" value="F:zinc ion binding"/>
    <property type="evidence" value="ECO:0007669"/>
    <property type="project" value="UniProtKB-UniRule"/>
</dbReference>
<dbReference type="GO" id="GO:0006364">
    <property type="term" value="P:rRNA processing"/>
    <property type="evidence" value="ECO:0007669"/>
    <property type="project" value="UniProtKB-UniRule"/>
</dbReference>
<dbReference type="Gene3D" id="3.40.390.30">
    <property type="entry name" value="Metalloproteases ('zincins'), catalytic domain"/>
    <property type="match status" value="1"/>
</dbReference>
<dbReference type="HAMAP" id="MF_00009">
    <property type="entry name" value="Endoribonucl_YbeY"/>
    <property type="match status" value="1"/>
</dbReference>
<dbReference type="InterPro" id="IPR023091">
    <property type="entry name" value="MetalPrtase_cat_dom_sf_prd"/>
</dbReference>
<dbReference type="InterPro" id="IPR002036">
    <property type="entry name" value="YbeY"/>
</dbReference>
<dbReference type="NCBIfam" id="TIGR00043">
    <property type="entry name" value="rRNA maturation RNase YbeY"/>
    <property type="match status" value="1"/>
</dbReference>
<dbReference type="PANTHER" id="PTHR46986">
    <property type="entry name" value="ENDORIBONUCLEASE YBEY, CHLOROPLASTIC"/>
    <property type="match status" value="1"/>
</dbReference>
<dbReference type="PANTHER" id="PTHR46986:SF1">
    <property type="entry name" value="ENDORIBONUCLEASE YBEY, CHLOROPLASTIC"/>
    <property type="match status" value="1"/>
</dbReference>
<dbReference type="Pfam" id="PF02130">
    <property type="entry name" value="YbeY"/>
    <property type="match status" value="1"/>
</dbReference>
<dbReference type="SUPFAM" id="SSF55486">
    <property type="entry name" value="Metalloproteases ('zincins'), catalytic domain"/>
    <property type="match status" value="1"/>
</dbReference>
<keyword id="KW-0963">Cytoplasm</keyword>
<keyword id="KW-0255">Endonuclease</keyword>
<keyword id="KW-0378">Hydrolase</keyword>
<keyword id="KW-0479">Metal-binding</keyword>
<keyword id="KW-0540">Nuclease</keyword>
<keyword id="KW-1185">Reference proteome</keyword>
<keyword id="KW-0690">Ribosome biogenesis</keyword>
<keyword id="KW-0698">rRNA processing</keyword>
<keyword id="KW-0862">Zinc</keyword>